<keyword id="KW-0007">Acetylation</keyword>
<keyword id="KW-0131">Cell cycle</keyword>
<keyword id="KW-0132">Cell division</keyword>
<keyword id="KW-0966">Cell projection</keyword>
<keyword id="KW-0969">Cilium</keyword>
<keyword id="KW-0175">Coiled coil</keyword>
<keyword id="KW-0963">Cytoplasm</keyword>
<keyword id="KW-0206">Cytoskeleton</keyword>
<keyword id="KW-0282">Flagellum</keyword>
<keyword id="KW-0524">Neurogenesis</keyword>
<keyword id="KW-0539">Nucleus</keyword>
<keyword id="KW-1267">Proteomics identification</keyword>
<keyword id="KW-1185">Reference proteome</keyword>
<feature type="initiator methionine" description="Removed" evidence="15">
    <location>
        <position position="1"/>
    </location>
</feature>
<feature type="chain" id="PRO_0000114483" description="Microtubule nucleation factor SSNA1">
    <location>
        <begin position="2"/>
        <end position="119"/>
    </location>
</feature>
<feature type="region of interest" description="Important for localization to the centrosome" evidence="9">
    <location>
        <begin position="2"/>
        <end position="32"/>
    </location>
</feature>
<feature type="coiled-coil region" evidence="3">
    <location>
        <begin position="13"/>
        <end position="70"/>
    </location>
</feature>
<feature type="modified residue" description="N-acetylthreonine" evidence="15">
    <location>
        <position position="2"/>
    </location>
</feature>
<feature type="sequence variant" id="VAR_036343" description="In a breast cancer sample; somatic mutation; dbSNP:rs1289962028." evidence="7">
    <original>K</original>
    <variation>N</variation>
    <location>
        <position position="17"/>
    </location>
</feature>
<feature type="mutagenesis site" description="Does not affect oligomer formation; when associated with S-23 and S-30." evidence="8">
    <original>C</original>
    <variation>S</variation>
    <location>
        <position position="18"/>
    </location>
</feature>
<feature type="mutagenesis site" description="Does not affect oligomer formation; when associated with S-18 and S-30." evidence="8">
    <original>C</original>
    <variation>S</variation>
    <location>
        <position position="23"/>
    </location>
</feature>
<feature type="mutagenesis site" description="Does not affect oligomer formation; when associated with S-18 and S-23." evidence="8">
    <original>C</original>
    <variation>S</variation>
    <location>
        <position position="30"/>
    </location>
</feature>
<feature type="sequence conflict" description="In Ref. 3; CAG47034." evidence="13" ref="3">
    <original>V</original>
    <variation>A</variation>
    <location>
        <position position="57"/>
    </location>
</feature>
<feature type="sequence conflict" description="In Ref. 1; CAB09660." evidence="13" ref="1">
    <original>S</original>
    <variation>F</variation>
    <location>
        <position position="89"/>
    </location>
</feature>
<gene>
    <name evidence="14" type="primary">SSNA1</name>
    <name evidence="12" type="synonym">NA14</name>
</gene>
<protein>
    <recommendedName>
        <fullName evidence="1">Microtubule nucleation factor SSNA1</fullName>
    </recommendedName>
    <alternativeName>
        <fullName evidence="12">Nuclear autoantigen of 14 kDa</fullName>
    </alternativeName>
    <alternativeName>
        <fullName>Sjoegren syndrome nuclear autoantigen 1</fullName>
    </alternativeName>
</protein>
<evidence type="ECO:0000250" key="1">
    <source>
        <dbReference type="UniProtKB" id="Q9JJ94"/>
    </source>
</evidence>
<evidence type="ECO:0000250" key="2">
    <source>
        <dbReference type="UniProtKB" id="Q9XF62"/>
    </source>
</evidence>
<evidence type="ECO:0000255" key="3"/>
<evidence type="ECO:0000269" key="4">
    <source>
    </source>
</evidence>
<evidence type="ECO:0000269" key="5">
    <source>
    </source>
</evidence>
<evidence type="ECO:0000269" key="6">
    <source>
    </source>
</evidence>
<evidence type="ECO:0000269" key="7">
    <source>
    </source>
</evidence>
<evidence type="ECO:0000269" key="8">
    <source>
    </source>
</evidence>
<evidence type="ECO:0000269" key="9">
    <source>
    </source>
</evidence>
<evidence type="ECO:0000269" key="10">
    <source>
    </source>
</evidence>
<evidence type="ECO:0000269" key="11">
    <source>
    </source>
</evidence>
<evidence type="ECO:0000303" key="12">
    <source>
    </source>
</evidence>
<evidence type="ECO:0000305" key="13"/>
<evidence type="ECO:0000312" key="14">
    <source>
        <dbReference type="HGNC" id="HGNC:11321"/>
    </source>
</evidence>
<evidence type="ECO:0007744" key="15">
    <source>
    </source>
</evidence>
<proteinExistence type="evidence at protein level"/>
<dbReference type="EMBL" id="Z96932">
    <property type="protein sequence ID" value="CAB09660.1"/>
    <property type="molecule type" value="mRNA"/>
</dbReference>
<dbReference type="EMBL" id="BT006766">
    <property type="protein sequence ID" value="AAP35412.1"/>
    <property type="molecule type" value="mRNA"/>
</dbReference>
<dbReference type="EMBL" id="CR542238">
    <property type="protein sequence ID" value="CAG47034.1"/>
    <property type="molecule type" value="mRNA"/>
</dbReference>
<dbReference type="EMBL" id="AL929554">
    <property type="status" value="NOT_ANNOTATED_CDS"/>
    <property type="molecule type" value="Genomic_DNA"/>
</dbReference>
<dbReference type="EMBL" id="CH471090">
    <property type="protein sequence ID" value="EAW88362.1"/>
    <property type="molecule type" value="Genomic_DNA"/>
</dbReference>
<dbReference type="EMBL" id="BC000864">
    <property type="protein sequence ID" value="AAH00864.1"/>
    <property type="molecule type" value="mRNA"/>
</dbReference>
<dbReference type="CCDS" id="CCDS7034.1"/>
<dbReference type="RefSeq" id="NP_003722.2">
    <property type="nucleotide sequence ID" value="NM_003731.3"/>
</dbReference>
<dbReference type="SMR" id="O43805"/>
<dbReference type="BioGRID" id="114189">
    <property type="interactions" value="44"/>
</dbReference>
<dbReference type="FunCoup" id="O43805">
    <property type="interactions" value="297"/>
</dbReference>
<dbReference type="IntAct" id="O43805">
    <property type="interactions" value="35"/>
</dbReference>
<dbReference type="MINT" id="O43805"/>
<dbReference type="STRING" id="9606.ENSP00000313752"/>
<dbReference type="GlyGen" id="O43805">
    <property type="glycosylation" value="1 site"/>
</dbReference>
<dbReference type="iPTMnet" id="O43805"/>
<dbReference type="PhosphoSitePlus" id="O43805"/>
<dbReference type="BioMuta" id="SSNA1"/>
<dbReference type="jPOST" id="O43805"/>
<dbReference type="MassIVE" id="O43805"/>
<dbReference type="PaxDb" id="9606-ENSP00000313752"/>
<dbReference type="PeptideAtlas" id="O43805"/>
<dbReference type="ProteomicsDB" id="49174"/>
<dbReference type="Pumba" id="O43805"/>
<dbReference type="Antibodypedia" id="32398">
    <property type="antibodies" value="104 antibodies from 23 providers"/>
</dbReference>
<dbReference type="DNASU" id="8636"/>
<dbReference type="Ensembl" id="ENST00000322310.10">
    <property type="protein sequence ID" value="ENSP00000313752.5"/>
    <property type="gene ID" value="ENSG00000176101.12"/>
</dbReference>
<dbReference type="GeneID" id="8636"/>
<dbReference type="KEGG" id="hsa:8636"/>
<dbReference type="MANE-Select" id="ENST00000322310.10">
    <property type="protein sequence ID" value="ENSP00000313752.5"/>
    <property type="RefSeq nucleotide sequence ID" value="NM_003731.3"/>
    <property type="RefSeq protein sequence ID" value="NP_003722.2"/>
</dbReference>
<dbReference type="UCSC" id="uc004cls.3">
    <property type="organism name" value="human"/>
</dbReference>
<dbReference type="AGR" id="HGNC:11321"/>
<dbReference type="CTD" id="8636"/>
<dbReference type="DisGeNET" id="8636"/>
<dbReference type="GeneCards" id="SSNA1"/>
<dbReference type="HGNC" id="HGNC:11321">
    <property type="gene designation" value="SSNA1"/>
</dbReference>
<dbReference type="HPA" id="ENSG00000176101">
    <property type="expression patterns" value="Low tissue specificity"/>
</dbReference>
<dbReference type="MIM" id="610882">
    <property type="type" value="gene"/>
</dbReference>
<dbReference type="neXtProt" id="NX_O43805"/>
<dbReference type="OpenTargets" id="ENSG00000176101"/>
<dbReference type="PharmGKB" id="PA36145"/>
<dbReference type="VEuPathDB" id="HostDB:ENSG00000176101"/>
<dbReference type="eggNOG" id="ENOG502S16M">
    <property type="taxonomic scope" value="Eukaryota"/>
</dbReference>
<dbReference type="GeneTree" id="ENSGT00390000012318"/>
<dbReference type="HOGENOM" id="CLU_153440_0_0_1"/>
<dbReference type="InParanoid" id="O43805"/>
<dbReference type="OMA" id="ETKNEYD"/>
<dbReference type="OrthoDB" id="295355at2759"/>
<dbReference type="PAN-GO" id="O43805">
    <property type="GO annotations" value="2 GO annotations based on evolutionary models"/>
</dbReference>
<dbReference type="PhylomeDB" id="O43805"/>
<dbReference type="TreeFam" id="TF328451"/>
<dbReference type="PathwayCommons" id="O43805"/>
<dbReference type="Reactome" id="R-HSA-2565942">
    <property type="pathway name" value="Regulation of PLK1 Activity at G2/M Transition"/>
</dbReference>
<dbReference type="Reactome" id="R-HSA-380259">
    <property type="pathway name" value="Loss of Nlp from mitotic centrosomes"/>
</dbReference>
<dbReference type="Reactome" id="R-HSA-380270">
    <property type="pathway name" value="Recruitment of mitotic centrosome proteins and complexes"/>
</dbReference>
<dbReference type="Reactome" id="R-HSA-380284">
    <property type="pathway name" value="Loss of proteins required for interphase microtubule organization from the centrosome"/>
</dbReference>
<dbReference type="Reactome" id="R-HSA-380320">
    <property type="pathway name" value="Recruitment of NuMA to mitotic centrosomes"/>
</dbReference>
<dbReference type="Reactome" id="R-HSA-5620912">
    <property type="pathway name" value="Anchoring of the basal body to the plasma membrane"/>
</dbReference>
<dbReference type="Reactome" id="R-HSA-8854518">
    <property type="pathway name" value="AURKA Activation by TPX2"/>
</dbReference>
<dbReference type="SignaLink" id="O43805"/>
<dbReference type="BioGRID-ORCS" id="8636">
    <property type="hits" value="19 hits in 1160 CRISPR screens"/>
</dbReference>
<dbReference type="CD-CODE" id="8C2F96ED">
    <property type="entry name" value="Centrosome"/>
</dbReference>
<dbReference type="ChiTaRS" id="SSNA1">
    <property type="organism name" value="human"/>
</dbReference>
<dbReference type="GenomeRNAi" id="8636"/>
<dbReference type="Pharos" id="O43805">
    <property type="development level" value="Tbio"/>
</dbReference>
<dbReference type="PRO" id="PR:O43805"/>
<dbReference type="Proteomes" id="UP000005640">
    <property type="component" value="Chromosome 9"/>
</dbReference>
<dbReference type="RNAct" id="O43805">
    <property type="molecule type" value="protein"/>
</dbReference>
<dbReference type="Bgee" id="ENSG00000176101">
    <property type="expression patterns" value="Expressed in left testis and 203 other cell types or tissues"/>
</dbReference>
<dbReference type="ExpressionAtlas" id="O43805">
    <property type="expression patterns" value="baseline and differential"/>
</dbReference>
<dbReference type="GO" id="GO:0030424">
    <property type="term" value="C:axon"/>
    <property type="evidence" value="ECO:0000250"/>
    <property type="project" value="UniProtKB"/>
</dbReference>
<dbReference type="GO" id="GO:0005930">
    <property type="term" value="C:axoneme"/>
    <property type="evidence" value="ECO:0000314"/>
    <property type="project" value="UniProtKB"/>
</dbReference>
<dbReference type="GO" id="GO:0005814">
    <property type="term" value="C:centriole"/>
    <property type="evidence" value="ECO:0000314"/>
    <property type="project" value="UniProtKB"/>
</dbReference>
<dbReference type="GO" id="GO:0005813">
    <property type="term" value="C:centrosome"/>
    <property type="evidence" value="ECO:0000314"/>
    <property type="project" value="UniProtKB"/>
</dbReference>
<dbReference type="GO" id="GO:0036064">
    <property type="term" value="C:ciliary basal body"/>
    <property type="evidence" value="ECO:0000314"/>
    <property type="project" value="UniProtKB"/>
</dbReference>
<dbReference type="GO" id="GO:0005829">
    <property type="term" value="C:cytosol"/>
    <property type="evidence" value="ECO:0000304"/>
    <property type="project" value="Reactome"/>
</dbReference>
<dbReference type="GO" id="GO:0030496">
    <property type="term" value="C:midbody"/>
    <property type="evidence" value="ECO:0000314"/>
    <property type="project" value="UniProtKB"/>
</dbReference>
<dbReference type="GO" id="GO:0031514">
    <property type="term" value="C:motile cilium"/>
    <property type="evidence" value="ECO:0007669"/>
    <property type="project" value="UniProtKB-KW"/>
</dbReference>
<dbReference type="GO" id="GO:0005634">
    <property type="term" value="C:nucleus"/>
    <property type="evidence" value="ECO:0000304"/>
    <property type="project" value="ProtInc"/>
</dbReference>
<dbReference type="GO" id="GO:0005886">
    <property type="term" value="C:plasma membrane"/>
    <property type="evidence" value="ECO:0007669"/>
    <property type="project" value="GOC"/>
</dbReference>
<dbReference type="GO" id="GO:0099512">
    <property type="term" value="C:supramolecular fiber"/>
    <property type="evidence" value="ECO:0000314"/>
    <property type="project" value="UniProtKB"/>
</dbReference>
<dbReference type="GO" id="GO:0042802">
    <property type="term" value="F:identical protein binding"/>
    <property type="evidence" value="ECO:0000353"/>
    <property type="project" value="IntAct"/>
</dbReference>
<dbReference type="GO" id="GO:0008017">
    <property type="term" value="F:microtubule binding"/>
    <property type="evidence" value="ECO:0000314"/>
    <property type="project" value="UniProtKB"/>
</dbReference>
<dbReference type="GO" id="GO:0140060">
    <property type="term" value="P:axon arborization"/>
    <property type="evidence" value="ECO:0000315"/>
    <property type="project" value="UniProtKB"/>
</dbReference>
<dbReference type="GO" id="GO:0048675">
    <property type="term" value="P:axon extension"/>
    <property type="evidence" value="ECO:0000315"/>
    <property type="project" value="UniProtKB"/>
</dbReference>
<dbReference type="GO" id="GO:0007409">
    <property type="term" value="P:axonogenesis"/>
    <property type="evidence" value="ECO:0000250"/>
    <property type="project" value="UniProtKB"/>
</dbReference>
<dbReference type="GO" id="GO:0051301">
    <property type="term" value="P:cell division"/>
    <property type="evidence" value="ECO:0000315"/>
    <property type="project" value="UniProtKB"/>
</dbReference>
<dbReference type="GO" id="GO:0042073">
    <property type="term" value="P:intraciliary transport"/>
    <property type="evidence" value="ECO:0007669"/>
    <property type="project" value="Ensembl"/>
</dbReference>
<dbReference type="GO" id="GO:0000226">
    <property type="term" value="P:microtubule cytoskeleton organization"/>
    <property type="evidence" value="ECO:0000314"/>
    <property type="project" value="UniProtKB"/>
</dbReference>
<dbReference type="GO" id="GO:0007020">
    <property type="term" value="P:microtubule nucleation"/>
    <property type="evidence" value="ECO:0000314"/>
    <property type="project" value="UniProtKB"/>
</dbReference>
<dbReference type="GO" id="GO:0043113">
    <property type="term" value="P:receptor clustering"/>
    <property type="evidence" value="ECO:0007669"/>
    <property type="project" value="Ensembl"/>
</dbReference>
<dbReference type="InterPro" id="IPR033362">
    <property type="entry name" value="SSNA1_fam"/>
</dbReference>
<dbReference type="PANTHER" id="PTHR28661:SF1">
    <property type="entry name" value="MICROTUBULE NUCLEATION FACTOR SSNA1"/>
    <property type="match status" value="1"/>
</dbReference>
<dbReference type="PANTHER" id="PTHR28661">
    <property type="entry name" value="SJOEGREN SYNDROME NUCLEAR AUTOANTIGEN 1"/>
    <property type="match status" value="1"/>
</dbReference>
<comment type="function">
    <text evidence="2 9 10">Microtubule-binding protein which stabilizes dynamic microtubules by slowing growth and shrinkage at both plus and minus ends and serves as a sensor of microtubule damage, protecting microtubules from the microtubule-severing enzyme SPAST (PubMed:34970964). Induces microtubule branching which is mediated by the formation of long SSNA1 fibrils which guide microtubule protofilaments to split apart from the mother microtubule and form daughter microtubules (By similarity). Plays a role in axon outgrowth and branching (PubMed:25390646). Required for cell division (PubMed:25390646).</text>
</comment>
<comment type="subunit">
    <text evidence="6 8 9 10">Self-associates to form fibrils (PubMed:22008182, PubMed:34970964). Also forms dimers as well as monomers (PubMed:22008182). Interacts with SPAST (PubMed:15269182, PubMed:25390646).</text>
</comment>
<comment type="interaction">
    <interactant intactId="EBI-2515299">
        <id>O43805</id>
    </interactant>
    <interactant intactId="EBI-295634">
        <id>Q16543</id>
        <label>CDC37</label>
    </interactant>
    <organismsDiffer>false</organismsDiffer>
    <experiments>3</experiments>
</comment>
<comment type="interaction">
    <interactant intactId="EBI-2515299">
        <id>O43805</id>
    </interactant>
    <interactant intactId="EBI-2339219">
        <id>Q08426</id>
        <label>EHHADH</label>
    </interactant>
    <organismsDiffer>false</organismsDiffer>
    <experiments>4</experiments>
</comment>
<comment type="interaction">
    <interactant intactId="EBI-2515299">
        <id>O43805</id>
    </interactant>
    <interactant intactId="EBI-349832">
        <id>Q9HD26</id>
        <label>GOPC</label>
    </interactant>
    <organismsDiffer>false</organismsDiffer>
    <experiments>4</experiments>
</comment>
<comment type="interaction">
    <interactant intactId="EBI-2515299">
        <id>O43805</id>
    </interactant>
    <interactant intactId="EBI-6658186">
        <id>Q86VQ0</id>
        <label>LCA5</label>
    </interactant>
    <organismsDiffer>false</organismsDiffer>
    <experiments>3</experiments>
</comment>
<comment type="interaction">
    <interactant intactId="EBI-2515299">
        <id>O43805</id>
    </interactant>
    <interactant intactId="EBI-739832">
        <id>Q8TBB1</id>
        <label>LNX1</label>
    </interactant>
    <organismsDiffer>false</organismsDiffer>
    <experiments>7</experiments>
</comment>
<comment type="interaction">
    <interactant intactId="EBI-2515299">
        <id>O43805</id>
    </interactant>
    <interactant intactId="EBI-741158">
        <id>Q96HA8</id>
        <label>NTAQ1</label>
    </interactant>
    <organismsDiffer>false</organismsDiffer>
    <experiments>3</experiments>
</comment>
<comment type="interaction">
    <interactant intactId="EBI-2515299">
        <id>O43805</id>
    </interactant>
    <interactant intactId="EBI-79165">
        <id>Q9NRD5</id>
        <label>PICK1</label>
    </interactant>
    <organismsDiffer>false</organismsDiffer>
    <experiments>3</experiments>
</comment>
<comment type="interaction">
    <interactant intactId="EBI-2515299">
        <id>O43805</id>
    </interactant>
    <interactant intactId="EBI-2340927">
        <id>P78317</id>
        <label>RNF4</label>
    </interactant>
    <organismsDiffer>false</organismsDiffer>
    <experiments>3</experiments>
</comment>
<comment type="interaction">
    <interactant intactId="EBI-2515299">
        <id>O43805</id>
    </interactant>
    <interactant intactId="EBI-727004">
        <id>O00560</id>
        <label>SDCBP</label>
    </interactant>
    <organismsDiffer>false</organismsDiffer>
    <experiments>6</experiments>
</comment>
<comment type="interaction">
    <interactant intactId="EBI-2515299">
        <id>O43805</id>
    </interactant>
    <interactant intactId="EBI-2515299">
        <id>O43805</id>
        <label>SSNA1</label>
    </interactant>
    <organismsDiffer>false</organismsDiffer>
    <experiments>9</experiments>
</comment>
<comment type="interaction">
    <interactant intactId="EBI-2515299">
        <id>O43805</id>
    </interactant>
    <interactant intactId="EBI-3258000">
        <id>Q9P0N9</id>
        <label>TBC1D7</label>
    </interactant>
    <organismsDiffer>false</organismsDiffer>
    <experiments>7</experiments>
</comment>
<comment type="interaction">
    <interactant intactId="EBI-2515299">
        <id>O43805</id>
    </interactant>
    <interactant intactId="EBI-954696">
        <id>Q8N8B7</id>
        <label>TCEANC</label>
    </interactant>
    <organismsDiffer>false</organismsDiffer>
    <experiments>3</experiments>
</comment>
<comment type="interaction">
    <interactant intactId="EBI-2515299">
        <id>O43805</id>
    </interactant>
    <interactant intactId="EBI-11955057">
        <id>Q8N8B7-2</id>
        <label>TCEANC</label>
    </interactant>
    <organismsDiffer>false</organismsDiffer>
    <experiments>3</experiments>
</comment>
<comment type="interaction">
    <interactant intactId="EBI-2515299">
        <id>O43805</id>
    </interactant>
    <interactant intactId="EBI-2932492">
        <id>Q99757</id>
        <label>TXN2</label>
    </interactant>
    <organismsDiffer>false</organismsDiffer>
    <experiments>6</experiments>
</comment>
<comment type="subcellular location">
    <subcellularLocation>
        <location evidence="11">Nucleus</location>
    </subcellularLocation>
    <subcellularLocation>
        <location evidence="4 5 9">Cytoplasm</location>
        <location evidence="4 5 9">Cytoskeleton</location>
        <location evidence="4 5 9">Microtubule organizing center</location>
        <location evidence="4 5 9">Centrosome</location>
    </subcellularLocation>
    <subcellularLocation>
        <location evidence="9">Cytoplasm</location>
        <location evidence="9">Cytoskeleton</location>
        <location evidence="9">Microtubule organizing center</location>
        <location evidence="9">Centrosome</location>
        <location evidence="9">Centriole</location>
    </subcellularLocation>
    <subcellularLocation>
        <location evidence="9">Midbody</location>
    </subcellularLocation>
    <subcellularLocation>
        <location evidence="4">Cytoplasm</location>
        <location evidence="4">Cytoskeleton</location>
        <location evidence="4">Flagellum basal body</location>
    </subcellularLocation>
    <subcellularLocation>
        <location evidence="4">Cytoplasm</location>
        <location evidence="4">Cytoskeleton</location>
        <location evidence="4">Flagellum axoneme</location>
    </subcellularLocation>
    <subcellularLocation>
        <location evidence="1">Cell projection</location>
        <location evidence="1">Axon</location>
    </subcellularLocation>
    <text evidence="1 4">In sperm, strongly expressed in the basal body region with weaker expression in the axoneme (PubMed:12640030). Localizes to axon branching points in neurons (By similarity).</text>
</comment>
<comment type="tissue specificity">
    <text evidence="11">Widely expressed.</text>
</comment>
<comment type="similarity">
    <text evidence="13">Belongs to the SSNA1 family.</text>
</comment>
<name>SSNA1_HUMAN</name>
<accession>O43805</accession>
<accession>Q5VSG0</accession>
<accession>Q6FG70</accession>
<accession>Q9BVW8</accession>
<sequence length="119" mass="13596">MTQQGAALQNYNNELVKCIEELCQKREELCRQIQEEEDEKQRLQNEVRQLTEKLARVNENLARKIASRNEFDRTIAETEAAYLKILESSQTLLSVLKREAGNLTKATAPDQKSSGGRDS</sequence>
<organism>
    <name type="scientific">Homo sapiens</name>
    <name type="common">Human</name>
    <dbReference type="NCBI Taxonomy" id="9606"/>
    <lineage>
        <taxon>Eukaryota</taxon>
        <taxon>Metazoa</taxon>
        <taxon>Chordata</taxon>
        <taxon>Craniata</taxon>
        <taxon>Vertebrata</taxon>
        <taxon>Euteleostomi</taxon>
        <taxon>Mammalia</taxon>
        <taxon>Eutheria</taxon>
        <taxon>Euarchontoglires</taxon>
        <taxon>Primates</taxon>
        <taxon>Haplorrhini</taxon>
        <taxon>Catarrhini</taxon>
        <taxon>Hominidae</taxon>
        <taxon>Homo</taxon>
    </lineage>
</organism>
<reference key="1">
    <citation type="journal article" date="1998" name="J. Biol. Chem.">
        <title>NA14 is a novel nuclear autoantigen with a coiled-coil domain.</title>
        <authorList>
            <person name="Ramos-Morales F."/>
            <person name="Infante C."/>
            <person name="Fedriani C."/>
            <person name="Bornens M."/>
            <person name="Rios R.M."/>
        </authorList>
    </citation>
    <scope>NUCLEOTIDE SEQUENCE [MRNA]</scope>
    <scope>SUBCELLULAR LOCATION</scope>
    <scope>TISSUE SPECIFICITY</scope>
    <source>
        <tissue>Testis</tissue>
    </source>
</reference>
<reference key="2">
    <citation type="submission" date="2003-05" db="EMBL/GenBank/DDBJ databases">
        <title>Cloning of human full-length CDSs in BD Creator(TM) system donor vector.</title>
        <authorList>
            <person name="Kalnine N."/>
            <person name="Chen X."/>
            <person name="Rolfs A."/>
            <person name="Halleck A."/>
            <person name="Hines L."/>
            <person name="Eisenstein S."/>
            <person name="Koundinya M."/>
            <person name="Raphael J."/>
            <person name="Moreira D."/>
            <person name="Kelley T."/>
            <person name="LaBaer J."/>
            <person name="Lin Y."/>
            <person name="Phelan M."/>
            <person name="Farmer A."/>
        </authorList>
    </citation>
    <scope>NUCLEOTIDE SEQUENCE [LARGE SCALE MRNA]</scope>
</reference>
<reference key="3">
    <citation type="submission" date="2004-06" db="EMBL/GenBank/DDBJ databases">
        <title>Cloning of human full open reading frames in Gateway(TM) system entry vector (pDONR201).</title>
        <authorList>
            <person name="Halleck A."/>
            <person name="Ebert L."/>
            <person name="Mkoundinya M."/>
            <person name="Schick M."/>
            <person name="Eisenstein S."/>
            <person name="Neubert P."/>
            <person name="Kstrang K."/>
            <person name="Schatten R."/>
            <person name="Shen B."/>
            <person name="Henze S."/>
            <person name="Mar W."/>
            <person name="Korn B."/>
            <person name="Zuo D."/>
            <person name="Hu Y."/>
            <person name="LaBaer J."/>
        </authorList>
    </citation>
    <scope>NUCLEOTIDE SEQUENCE [LARGE SCALE MRNA]</scope>
</reference>
<reference key="4">
    <citation type="journal article" date="2004" name="Nature">
        <title>DNA sequence and analysis of human chromosome 9.</title>
        <authorList>
            <person name="Humphray S.J."/>
            <person name="Oliver K."/>
            <person name="Hunt A.R."/>
            <person name="Plumb R.W."/>
            <person name="Loveland J.E."/>
            <person name="Howe K.L."/>
            <person name="Andrews T.D."/>
            <person name="Searle S."/>
            <person name="Hunt S.E."/>
            <person name="Scott C.E."/>
            <person name="Jones M.C."/>
            <person name="Ainscough R."/>
            <person name="Almeida J.P."/>
            <person name="Ambrose K.D."/>
            <person name="Ashwell R.I.S."/>
            <person name="Babbage A.K."/>
            <person name="Babbage S."/>
            <person name="Bagguley C.L."/>
            <person name="Bailey J."/>
            <person name="Banerjee R."/>
            <person name="Barker D.J."/>
            <person name="Barlow K.F."/>
            <person name="Bates K."/>
            <person name="Beasley H."/>
            <person name="Beasley O."/>
            <person name="Bird C.P."/>
            <person name="Bray-Allen S."/>
            <person name="Brown A.J."/>
            <person name="Brown J.Y."/>
            <person name="Burford D."/>
            <person name="Burrill W."/>
            <person name="Burton J."/>
            <person name="Carder C."/>
            <person name="Carter N.P."/>
            <person name="Chapman J.C."/>
            <person name="Chen Y."/>
            <person name="Clarke G."/>
            <person name="Clark S.Y."/>
            <person name="Clee C.M."/>
            <person name="Clegg S."/>
            <person name="Collier R.E."/>
            <person name="Corby N."/>
            <person name="Crosier M."/>
            <person name="Cummings A.T."/>
            <person name="Davies J."/>
            <person name="Dhami P."/>
            <person name="Dunn M."/>
            <person name="Dutta I."/>
            <person name="Dyer L.W."/>
            <person name="Earthrowl M.E."/>
            <person name="Faulkner L."/>
            <person name="Fleming C.J."/>
            <person name="Frankish A."/>
            <person name="Frankland J.A."/>
            <person name="French L."/>
            <person name="Fricker D.G."/>
            <person name="Garner P."/>
            <person name="Garnett J."/>
            <person name="Ghori J."/>
            <person name="Gilbert J.G.R."/>
            <person name="Glison C."/>
            <person name="Grafham D.V."/>
            <person name="Gribble S."/>
            <person name="Griffiths C."/>
            <person name="Griffiths-Jones S."/>
            <person name="Grocock R."/>
            <person name="Guy J."/>
            <person name="Hall R.E."/>
            <person name="Hammond S."/>
            <person name="Harley J.L."/>
            <person name="Harrison E.S.I."/>
            <person name="Hart E.A."/>
            <person name="Heath P.D."/>
            <person name="Henderson C.D."/>
            <person name="Hopkins B.L."/>
            <person name="Howard P.J."/>
            <person name="Howden P.J."/>
            <person name="Huckle E."/>
            <person name="Johnson C."/>
            <person name="Johnson D."/>
            <person name="Joy A.A."/>
            <person name="Kay M."/>
            <person name="Keenan S."/>
            <person name="Kershaw J.K."/>
            <person name="Kimberley A.M."/>
            <person name="King A."/>
            <person name="Knights A."/>
            <person name="Laird G.K."/>
            <person name="Langford C."/>
            <person name="Lawlor S."/>
            <person name="Leongamornlert D.A."/>
            <person name="Leversha M."/>
            <person name="Lloyd C."/>
            <person name="Lloyd D.M."/>
            <person name="Lovell J."/>
            <person name="Martin S."/>
            <person name="Mashreghi-Mohammadi M."/>
            <person name="Matthews L."/>
            <person name="McLaren S."/>
            <person name="McLay K.E."/>
            <person name="McMurray A."/>
            <person name="Milne S."/>
            <person name="Nickerson T."/>
            <person name="Nisbett J."/>
            <person name="Nordsiek G."/>
            <person name="Pearce A.V."/>
            <person name="Peck A.I."/>
            <person name="Porter K.M."/>
            <person name="Pandian R."/>
            <person name="Pelan S."/>
            <person name="Phillimore B."/>
            <person name="Povey S."/>
            <person name="Ramsey Y."/>
            <person name="Rand V."/>
            <person name="Scharfe M."/>
            <person name="Sehra H.K."/>
            <person name="Shownkeen R."/>
            <person name="Sims S.K."/>
            <person name="Skuce C.D."/>
            <person name="Smith M."/>
            <person name="Steward C.A."/>
            <person name="Swarbreck D."/>
            <person name="Sycamore N."/>
            <person name="Tester J."/>
            <person name="Thorpe A."/>
            <person name="Tracey A."/>
            <person name="Tromans A."/>
            <person name="Thomas D.W."/>
            <person name="Wall M."/>
            <person name="Wallis J.M."/>
            <person name="West A.P."/>
            <person name="Whitehead S.L."/>
            <person name="Willey D.L."/>
            <person name="Williams S.A."/>
            <person name="Wilming L."/>
            <person name="Wray P.W."/>
            <person name="Young L."/>
            <person name="Ashurst J.L."/>
            <person name="Coulson A."/>
            <person name="Blocker H."/>
            <person name="Durbin R.M."/>
            <person name="Sulston J.E."/>
            <person name="Hubbard T."/>
            <person name="Jackson M.J."/>
            <person name="Bentley D.R."/>
            <person name="Beck S."/>
            <person name="Rogers J."/>
            <person name="Dunham I."/>
        </authorList>
    </citation>
    <scope>NUCLEOTIDE SEQUENCE [LARGE SCALE GENOMIC DNA]</scope>
</reference>
<reference key="5">
    <citation type="submission" date="2005-07" db="EMBL/GenBank/DDBJ databases">
        <authorList>
            <person name="Mural R.J."/>
            <person name="Istrail S."/>
            <person name="Sutton G.G."/>
            <person name="Florea L."/>
            <person name="Halpern A.L."/>
            <person name="Mobarry C.M."/>
            <person name="Lippert R."/>
            <person name="Walenz B."/>
            <person name="Shatkay H."/>
            <person name="Dew I."/>
            <person name="Miller J.R."/>
            <person name="Flanigan M.J."/>
            <person name="Edwards N.J."/>
            <person name="Bolanos R."/>
            <person name="Fasulo D."/>
            <person name="Halldorsson B.V."/>
            <person name="Hannenhalli S."/>
            <person name="Turner R."/>
            <person name="Yooseph S."/>
            <person name="Lu F."/>
            <person name="Nusskern D.R."/>
            <person name="Shue B.C."/>
            <person name="Zheng X.H."/>
            <person name="Zhong F."/>
            <person name="Delcher A.L."/>
            <person name="Huson D.H."/>
            <person name="Kravitz S.A."/>
            <person name="Mouchard L."/>
            <person name="Reinert K."/>
            <person name="Remington K.A."/>
            <person name="Clark A.G."/>
            <person name="Waterman M.S."/>
            <person name="Eichler E.E."/>
            <person name="Adams M.D."/>
            <person name="Hunkapiller M.W."/>
            <person name="Myers E.W."/>
            <person name="Venter J.C."/>
        </authorList>
    </citation>
    <scope>NUCLEOTIDE SEQUENCE [LARGE SCALE GENOMIC DNA]</scope>
</reference>
<reference key="6">
    <citation type="journal article" date="2004" name="Genome Res.">
        <title>The status, quality, and expansion of the NIH full-length cDNA project: the Mammalian Gene Collection (MGC).</title>
        <authorList>
            <consortium name="The MGC Project Team"/>
        </authorList>
    </citation>
    <scope>NUCLEOTIDE SEQUENCE [LARGE SCALE MRNA]</scope>
    <source>
        <tissue>Cervix</tissue>
    </source>
</reference>
<reference key="7">
    <citation type="journal article" date="2003" name="J. Cell Sci.">
        <title>Chlamydomonas DIP13 and human NA14: a new class of proteins associated with microtubule structures is involved in cell division.</title>
        <authorList>
            <person name="Pfannenschmid F."/>
            <person name="Wimmer V.C."/>
            <person name="Rios R.M."/>
            <person name="Geimer S."/>
            <person name="Kroeckel U."/>
            <person name="Leiherer A."/>
            <person name="Haller K."/>
            <person name="Nemcova Y."/>
            <person name="Mages W."/>
        </authorList>
    </citation>
    <scope>SUBCELLULAR LOCATION</scope>
</reference>
<reference key="8">
    <citation type="journal article" date="2003" name="Nature">
        <title>Proteomic characterization of the human centrosome by protein correlation profiling.</title>
        <authorList>
            <person name="Andersen J.S."/>
            <person name="Wilkinson C.J."/>
            <person name="Mayor T."/>
            <person name="Mortensen P."/>
            <person name="Nigg E.A."/>
            <person name="Mann M."/>
        </authorList>
    </citation>
    <scope>IDENTIFICATION BY MASS SPECTROMETRY</scope>
    <scope>SUBCELLULAR LOCATION [LARGE SCALE ANALYSIS]</scope>
    <source>
        <tissue>Lymphoblast</tissue>
    </source>
</reference>
<reference key="9">
    <citation type="journal article" date="2004" name="Hum. Mol. Genet.">
        <title>Spastin interacts with the centrosomal protein NA14, and is enriched in the spindle pole, the midbody and the distal axon.</title>
        <authorList>
            <person name="Errico A."/>
            <person name="Claudiani P."/>
            <person name="D'Addio M."/>
            <person name="Rugarli E.I."/>
        </authorList>
    </citation>
    <scope>INTERACTION WITH SPAST</scope>
</reference>
<reference key="10">
    <citation type="journal article" date="2009" name="Anal. Chem.">
        <title>Lys-N and trypsin cover complementary parts of the phosphoproteome in a refined SCX-based approach.</title>
        <authorList>
            <person name="Gauci S."/>
            <person name="Helbig A.O."/>
            <person name="Slijper M."/>
            <person name="Krijgsveld J."/>
            <person name="Heck A.J."/>
            <person name="Mohammed S."/>
        </authorList>
    </citation>
    <scope>ACETYLATION [LARGE SCALE ANALYSIS] AT THR-2</scope>
    <scope>CLEAVAGE OF INITIATOR METHIONINE [LARGE SCALE ANALYSIS]</scope>
    <scope>IDENTIFICATION BY MASS SPECTROMETRY [LARGE SCALE ANALYSIS]</scope>
</reference>
<reference key="11">
    <citation type="journal article" date="2011" name="BMC Syst. Biol.">
        <title>Initial characterization of the human central proteome.</title>
        <authorList>
            <person name="Burkard T.R."/>
            <person name="Planyavsky M."/>
            <person name="Kaupe I."/>
            <person name="Breitwieser F.P."/>
            <person name="Buerckstuemmer T."/>
            <person name="Bennett K.L."/>
            <person name="Superti-Furga G."/>
            <person name="Colinge J."/>
        </authorList>
    </citation>
    <scope>IDENTIFICATION BY MASS SPECTROMETRY [LARGE SCALE ANALYSIS]</scope>
</reference>
<reference key="12">
    <citation type="journal article" date="2011" name="Protein Eng. Des. Sel.">
        <title>Characterization of the structure and self-recognition of the human centrosomal protein NA14: implications for stability and function.</title>
        <authorList>
            <person name="Rodriguez-Rodriguez M."/>
            <person name="Trevino M.A."/>
            <person name="Laurents D.V."/>
            <person name="Arranz R."/>
            <person name="Valpuesta J.M."/>
            <person name="Rico M."/>
            <person name="Bruix M."/>
            <person name="Jimenez M.A."/>
        </authorList>
    </citation>
    <scope>SUBUNIT</scope>
    <scope>MUTAGENESIS OF CYS-18; CYS-23 AND CYS-30</scope>
</reference>
<reference key="13">
    <citation type="journal article" date="2014" name="PLoS ONE">
        <title>Spastin-interacting protein NA14/SSNA1 functions in cytokinesis and axon development.</title>
        <authorList>
            <person name="Goyal U."/>
            <person name="Renvoise B."/>
            <person name="Chang J."/>
            <person name="Blackstone C."/>
        </authorList>
    </citation>
    <scope>FUNCTION</scope>
    <scope>INTERACTION WITH SPAST</scope>
    <scope>SUBCELLULAR LOCATION</scope>
</reference>
<reference key="14">
    <citation type="journal article" date="2021" name="Elife">
        <title>SSNA1 stabilizes dynamic microtubules and detects microtubule damage.</title>
        <authorList>
            <person name="Lawrence E.J."/>
            <person name="Arpag G."/>
            <person name="Arnaiz C."/>
            <person name="Zanic M."/>
        </authorList>
    </citation>
    <scope>FUNCTION</scope>
    <scope>SUBUNIT</scope>
</reference>
<reference key="15">
    <citation type="journal article" date="2006" name="Science">
        <title>The consensus coding sequences of human breast and colorectal cancers.</title>
        <authorList>
            <person name="Sjoeblom T."/>
            <person name="Jones S."/>
            <person name="Wood L.D."/>
            <person name="Parsons D.W."/>
            <person name="Lin J."/>
            <person name="Barber T.D."/>
            <person name="Mandelker D."/>
            <person name="Leary R.J."/>
            <person name="Ptak J."/>
            <person name="Silliman N."/>
            <person name="Szabo S."/>
            <person name="Buckhaults P."/>
            <person name="Farrell C."/>
            <person name="Meeh P."/>
            <person name="Markowitz S.D."/>
            <person name="Willis J."/>
            <person name="Dawson D."/>
            <person name="Willson J.K.V."/>
            <person name="Gazdar A.F."/>
            <person name="Hartigan J."/>
            <person name="Wu L."/>
            <person name="Liu C."/>
            <person name="Parmigiani G."/>
            <person name="Park B.H."/>
            <person name="Bachman K.E."/>
            <person name="Papadopoulos N."/>
            <person name="Vogelstein B."/>
            <person name="Kinzler K.W."/>
            <person name="Velculescu V.E."/>
        </authorList>
    </citation>
    <scope>VARIANT [LARGE SCALE ANALYSIS] ASN-17</scope>
</reference>